<reference key="1">
    <citation type="journal article" date="2004" name="Proc. Natl. Acad. Sci. U.S.A.">
        <title>Genome sequence of the deep-sea gamma-proteobacterium Idiomarina loihiensis reveals amino acid fermentation as a source of carbon and energy.</title>
        <authorList>
            <person name="Hou S."/>
            <person name="Saw J.H."/>
            <person name="Lee K.S."/>
            <person name="Freitas T.A."/>
            <person name="Belisle C."/>
            <person name="Kawarabayasi Y."/>
            <person name="Donachie S.P."/>
            <person name="Pikina A."/>
            <person name="Galperin M.Y."/>
            <person name="Koonin E.V."/>
            <person name="Makarova K.S."/>
            <person name="Omelchenko M.V."/>
            <person name="Sorokin A."/>
            <person name="Wolf Y.I."/>
            <person name="Li Q.X."/>
            <person name="Keum Y.S."/>
            <person name="Campbell S."/>
            <person name="Denery J."/>
            <person name="Aizawa S."/>
            <person name="Shibata S."/>
            <person name="Malahoff A."/>
            <person name="Alam M."/>
        </authorList>
    </citation>
    <scope>NUCLEOTIDE SEQUENCE [LARGE SCALE GENOMIC DNA]</scope>
    <source>
        <strain>ATCC BAA-735 / DSM 15497 / L2-TR</strain>
    </source>
</reference>
<accession>Q5QWC7</accession>
<sequence>MASLYFTYSAMNAGKSTSLLQVAHNYEERQQHVLLMTPALDDRAGKGRIASRLGIGRDAVSFTHRTDLAAVVRARYMQQAIDCVLIDEAQFLSEEQVWQLSSLADTDNIPVMCYGIRTDAFGNAFPGSAVLLAIADKLVEMKTICHCGRKATMSLRVDEQGNAIRMGQQIAIGGNDRYVSCCRKHWKEAMGLR</sequence>
<feature type="chain" id="PRO_0000174980" description="Thymidine kinase">
    <location>
        <begin position="1"/>
        <end position="193"/>
    </location>
</feature>
<feature type="active site" description="Proton acceptor" evidence="1">
    <location>
        <position position="88"/>
    </location>
</feature>
<feature type="binding site" evidence="1">
    <location>
        <begin position="9"/>
        <end position="16"/>
    </location>
    <ligand>
        <name>ATP</name>
        <dbReference type="ChEBI" id="CHEBI:30616"/>
    </ligand>
</feature>
<feature type="binding site" evidence="1">
    <location>
        <begin position="87"/>
        <end position="90"/>
    </location>
    <ligand>
        <name>ATP</name>
        <dbReference type="ChEBI" id="CHEBI:30616"/>
    </ligand>
</feature>
<feature type="binding site" evidence="1">
    <location>
        <position position="145"/>
    </location>
    <ligand>
        <name>Zn(2+)</name>
        <dbReference type="ChEBI" id="CHEBI:29105"/>
    </ligand>
</feature>
<feature type="binding site" evidence="1">
    <location>
        <position position="147"/>
    </location>
    <ligand>
        <name>Zn(2+)</name>
        <dbReference type="ChEBI" id="CHEBI:29105"/>
    </ligand>
</feature>
<feature type="binding site" evidence="1">
    <location>
        <position position="182"/>
    </location>
    <ligand>
        <name>Zn(2+)</name>
        <dbReference type="ChEBI" id="CHEBI:29105"/>
    </ligand>
</feature>
<feature type="binding site" evidence="1">
    <location>
        <position position="185"/>
    </location>
    <ligand>
        <name>Zn(2+)</name>
        <dbReference type="ChEBI" id="CHEBI:29105"/>
    </ligand>
</feature>
<dbReference type="EC" id="2.7.1.21" evidence="1"/>
<dbReference type="EMBL" id="AE017340">
    <property type="protein sequence ID" value="AAV81204.1"/>
    <property type="molecule type" value="Genomic_DNA"/>
</dbReference>
<dbReference type="RefSeq" id="WP_011233622.1">
    <property type="nucleotide sequence ID" value="NC_006512.1"/>
</dbReference>
<dbReference type="SMR" id="Q5QWC7"/>
<dbReference type="STRING" id="283942.IL0361"/>
<dbReference type="GeneID" id="41335513"/>
<dbReference type="KEGG" id="ilo:IL0361"/>
<dbReference type="eggNOG" id="COG1435">
    <property type="taxonomic scope" value="Bacteria"/>
</dbReference>
<dbReference type="HOGENOM" id="CLU_064400_2_1_6"/>
<dbReference type="OrthoDB" id="9781579at2"/>
<dbReference type="Proteomes" id="UP000001171">
    <property type="component" value="Chromosome"/>
</dbReference>
<dbReference type="GO" id="GO:0005829">
    <property type="term" value="C:cytosol"/>
    <property type="evidence" value="ECO:0007669"/>
    <property type="project" value="TreeGrafter"/>
</dbReference>
<dbReference type="GO" id="GO:0005524">
    <property type="term" value="F:ATP binding"/>
    <property type="evidence" value="ECO:0007669"/>
    <property type="project" value="UniProtKB-UniRule"/>
</dbReference>
<dbReference type="GO" id="GO:0004797">
    <property type="term" value="F:thymidine kinase activity"/>
    <property type="evidence" value="ECO:0007669"/>
    <property type="project" value="UniProtKB-UniRule"/>
</dbReference>
<dbReference type="GO" id="GO:0008270">
    <property type="term" value="F:zinc ion binding"/>
    <property type="evidence" value="ECO:0007669"/>
    <property type="project" value="UniProtKB-UniRule"/>
</dbReference>
<dbReference type="GO" id="GO:0071897">
    <property type="term" value="P:DNA biosynthetic process"/>
    <property type="evidence" value="ECO:0007669"/>
    <property type="project" value="UniProtKB-KW"/>
</dbReference>
<dbReference type="GO" id="GO:0046104">
    <property type="term" value="P:thymidine metabolic process"/>
    <property type="evidence" value="ECO:0007669"/>
    <property type="project" value="TreeGrafter"/>
</dbReference>
<dbReference type="Gene3D" id="3.30.60.20">
    <property type="match status" value="1"/>
</dbReference>
<dbReference type="Gene3D" id="3.40.50.300">
    <property type="entry name" value="P-loop containing nucleotide triphosphate hydrolases"/>
    <property type="match status" value="1"/>
</dbReference>
<dbReference type="HAMAP" id="MF_00124">
    <property type="entry name" value="Thymidine_kinase"/>
    <property type="match status" value="1"/>
</dbReference>
<dbReference type="InterPro" id="IPR027417">
    <property type="entry name" value="P-loop_NTPase"/>
</dbReference>
<dbReference type="InterPro" id="IPR001267">
    <property type="entry name" value="Thymidine_kinase"/>
</dbReference>
<dbReference type="InterPro" id="IPR020633">
    <property type="entry name" value="Thymidine_kinase_CS"/>
</dbReference>
<dbReference type="NCBIfam" id="NF003300">
    <property type="entry name" value="PRK04296.1-5"/>
    <property type="match status" value="1"/>
</dbReference>
<dbReference type="PANTHER" id="PTHR11441">
    <property type="entry name" value="THYMIDINE KINASE"/>
    <property type="match status" value="1"/>
</dbReference>
<dbReference type="PANTHER" id="PTHR11441:SF0">
    <property type="entry name" value="THYMIDINE KINASE, CYTOSOLIC"/>
    <property type="match status" value="1"/>
</dbReference>
<dbReference type="Pfam" id="PF00265">
    <property type="entry name" value="TK"/>
    <property type="match status" value="1"/>
</dbReference>
<dbReference type="PIRSF" id="PIRSF035805">
    <property type="entry name" value="TK_cell"/>
    <property type="match status" value="1"/>
</dbReference>
<dbReference type="SUPFAM" id="SSF57716">
    <property type="entry name" value="Glucocorticoid receptor-like (DNA-binding domain)"/>
    <property type="match status" value="1"/>
</dbReference>
<dbReference type="SUPFAM" id="SSF52540">
    <property type="entry name" value="P-loop containing nucleoside triphosphate hydrolases"/>
    <property type="match status" value="1"/>
</dbReference>
<dbReference type="PROSITE" id="PS00603">
    <property type="entry name" value="TK_CELLULAR_TYPE"/>
    <property type="match status" value="1"/>
</dbReference>
<organism>
    <name type="scientific">Idiomarina loihiensis (strain ATCC BAA-735 / DSM 15497 / L2-TR)</name>
    <dbReference type="NCBI Taxonomy" id="283942"/>
    <lineage>
        <taxon>Bacteria</taxon>
        <taxon>Pseudomonadati</taxon>
        <taxon>Pseudomonadota</taxon>
        <taxon>Gammaproteobacteria</taxon>
        <taxon>Alteromonadales</taxon>
        <taxon>Idiomarinaceae</taxon>
        <taxon>Idiomarina</taxon>
    </lineage>
</organism>
<comment type="catalytic activity">
    <reaction evidence="1">
        <text>thymidine + ATP = dTMP + ADP + H(+)</text>
        <dbReference type="Rhea" id="RHEA:19129"/>
        <dbReference type="ChEBI" id="CHEBI:15378"/>
        <dbReference type="ChEBI" id="CHEBI:17748"/>
        <dbReference type="ChEBI" id="CHEBI:30616"/>
        <dbReference type="ChEBI" id="CHEBI:63528"/>
        <dbReference type="ChEBI" id="CHEBI:456216"/>
        <dbReference type="EC" id="2.7.1.21"/>
    </reaction>
</comment>
<comment type="subunit">
    <text evidence="1">Homotetramer.</text>
</comment>
<comment type="subcellular location">
    <subcellularLocation>
        <location evidence="1">Cytoplasm</location>
    </subcellularLocation>
</comment>
<comment type="similarity">
    <text evidence="1">Belongs to the thymidine kinase family.</text>
</comment>
<evidence type="ECO:0000255" key="1">
    <source>
        <dbReference type="HAMAP-Rule" id="MF_00124"/>
    </source>
</evidence>
<name>KITH_IDILO</name>
<protein>
    <recommendedName>
        <fullName evidence="1">Thymidine kinase</fullName>
        <ecNumber evidence="1">2.7.1.21</ecNumber>
    </recommendedName>
</protein>
<gene>
    <name evidence="1" type="primary">tdk</name>
    <name type="ordered locus">IL0361</name>
</gene>
<proteinExistence type="inferred from homology"/>
<keyword id="KW-0067">ATP-binding</keyword>
<keyword id="KW-0963">Cytoplasm</keyword>
<keyword id="KW-0237">DNA synthesis</keyword>
<keyword id="KW-0418">Kinase</keyword>
<keyword id="KW-0479">Metal-binding</keyword>
<keyword id="KW-0547">Nucleotide-binding</keyword>
<keyword id="KW-1185">Reference proteome</keyword>
<keyword id="KW-0808">Transferase</keyword>
<keyword id="KW-0862">Zinc</keyword>